<gene>
    <name evidence="1" type="primary">thiG</name>
    <name type="ordered locus">Pro_1824</name>
</gene>
<feature type="chain" id="PRO_0000162842" description="Thiazole synthase">
    <location>
        <begin position="1"/>
        <end position="271"/>
    </location>
</feature>
<feature type="active site" description="Schiff-base intermediate with DXP" evidence="1">
    <location>
        <position position="108"/>
    </location>
</feature>
<feature type="binding site" evidence="1">
    <location>
        <position position="169"/>
    </location>
    <ligand>
        <name>1-deoxy-D-xylulose 5-phosphate</name>
        <dbReference type="ChEBI" id="CHEBI:57792"/>
    </ligand>
</feature>
<feature type="binding site" evidence="1">
    <location>
        <begin position="195"/>
        <end position="196"/>
    </location>
    <ligand>
        <name>1-deoxy-D-xylulose 5-phosphate</name>
        <dbReference type="ChEBI" id="CHEBI:57792"/>
    </ligand>
</feature>
<feature type="binding site" evidence="1">
    <location>
        <begin position="217"/>
        <end position="218"/>
    </location>
    <ligand>
        <name>1-deoxy-D-xylulose 5-phosphate</name>
        <dbReference type="ChEBI" id="CHEBI:57792"/>
    </ligand>
</feature>
<comment type="function">
    <text evidence="1">Catalyzes the rearrangement of 1-deoxy-D-xylulose 5-phosphate (DXP) to produce the thiazole phosphate moiety of thiamine. Sulfur is provided by the thiocarboxylate moiety of the carrier protein ThiS. In vitro, sulfur can be provided by H(2)S.</text>
</comment>
<comment type="catalytic activity">
    <reaction evidence="1">
        <text>[ThiS sulfur-carrier protein]-C-terminal-Gly-aminoethanethioate + 2-iminoacetate + 1-deoxy-D-xylulose 5-phosphate = [ThiS sulfur-carrier protein]-C-terminal Gly-Gly + 2-[(2R,5Z)-2-carboxy-4-methylthiazol-5(2H)-ylidene]ethyl phosphate + 2 H2O + H(+)</text>
        <dbReference type="Rhea" id="RHEA:26297"/>
        <dbReference type="Rhea" id="RHEA-COMP:12909"/>
        <dbReference type="Rhea" id="RHEA-COMP:19908"/>
        <dbReference type="ChEBI" id="CHEBI:15377"/>
        <dbReference type="ChEBI" id="CHEBI:15378"/>
        <dbReference type="ChEBI" id="CHEBI:57792"/>
        <dbReference type="ChEBI" id="CHEBI:62899"/>
        <dbReference type="ChEBI" id="CHEBI:77846"/>
        <dbReference type="ChEBI" id="CHEBI:90778"/>
        <dbReference type="ChEBI" id="CHEBI:232372"/>
        <dbReference type="EC" id="2.8.1.10"/>
    </reaction>
</comment>
<comment type="pathway">
    <text evidence="1">Cofactor biosynthesis; thiamine diphosphate biosynthesis.</text>
</comment>
<comment type="subunit">
    <text evidence="1">Homotetramer. Forms heterodimers with either ThiH or ThiS.</text>
</comment>
<comment type="subcellular location">
    <subcellularLocation>
        <location evidence="1">Cytoplasm</location>
    </subcellularLocation>
</comment>
<comment type="similarity">
    <text evidence="1">Belongs to the ThiG family.</text>
</comment>
<name>THIG_PROMA</name>
<dbReference type="EC" id="2.8.1.10" evidence="1"/>
<dbReference type="EMBL" id="AE017126">
    <property type="protein sequence ID" value="AAQ00868.1"/>
    <property type="molecule type" value="Genomic_DNA"/>
</dbReference>
<dbReference type="RefSeq" id="NP_876215.1">
    <property type="nucleotide sequence ID" value="NC_005042.1"/>
</dbReference>
<dbReference type="RefSeq" id="WP_011125973.1">
    <property type="nucleotide sequence ID" value="NC_005042.1"/>
</dbReference>
<dbReference type="SMR" id="Q7V9K9"/>
<dbReference type="STRING" id="167539.Pro_1824"/>
<dbReference type="EnsemblBacteria" id="AAQ00868">
    <property type="protein sequence ID" value="AAQ00868"/>
    <property type="gene ID" value="Pro_1824"/>
</dbReference>
<dbReference type="KEGG" id="pma:Pro_1824"/>
<dbReference type="PATRIC" id="fig|167539.5.peg.1926"/>
<dbReference type="eggNOG" id="COG2022">
    <property type="taxonomic scope" value="Bacteria"/>
</dbReference>
<dbReference type="HOGENOM" id="CLU_062233_1_0_3"/>
<dbReference type="OrthoDB" id="9805935at2"/>
<dbReference type="UniPathway" id="UPA00060"/>
<dbReference type="Proteomes" id="UP000001420">
    <property type="component" value="Chromosome"/>
</dbReference>
<dbReference type="GO" id="GO:0005737">
    <property type="term" value="C:cytoplasm"/>
    <property type="evidence" value="ECO:0007669"/>
    <property type="project" value="UniProtKB-SubCell"/>
</dbReference>
<dbReference type="GO" id="GO:1990107">
    <property type="term" value="F:thiazole synthase activity"/>
    <property type="evidence" value="ECO:0007669"/>
    <property type="project" value="UniProtKB-EC"/>
</dbReference>
<dbReference type="GO" id="GO:0009229">
    <property type="term" value="P:thiamine diphosphate biosynthetic process"/>
    <property type="evidence" value="ECO:0007669"/>
    <property type="project" value="UniProtKB-UniRule"/>
</dbReference>
<dbReference type="CDD" id="cd04728">
    <property type="entry name" value="ThiG"/>
    <property type="match status" value="1"/>
</dbReference>
<dbReference type="Gene3D" id="3.20.20.70">
    <property type="entry name" value="Aldolase class I"/>
    <property type="match status" value="1"/>
</dbReference>
<dbReference type="HAMAP" id="MF_00443">
    <property type="entry name" value="ThiG"/>
    <property type="match status" value="1"/>
</dbReference>
<dbReference type="InterPro" id="IPR013785">
    <property type="entry name" value="Aldolase_TIM"/>
</dbReference>
<dbReference type="InterPro" id="IPR033983">
    <property type="entry name" value="Thiazole_synthase_ThiG"/>
</dbReference>
<dbReference type="InterPro" id="IPR008867">
    <property type="entry name" value="ThiG"/>
</dbReference>
<dbReference type="PANTHER" id="PTHR34266">
    <property type="entry name" value="THIAZOLE SYNTHASE"/>
    <property type="match status" value="1"/>
</dbReference>
<dbReference type="PANTHER" id="PTHR34266:SF2">
    <property type="entry name" value="THIAZOLE SYNTHASE"/>
    <property type="match status" value="1"/>
</dbReference>
<dbReference type="Pfam" id="PF05690">
    <property type="entry name" value="ThiG"/>
    <property type="match status" value="1"/>
</dbReference>
<dbReference type="SUPFAM" id="SSF110399">
    <property type="entry name" value="ThiG-like"/>
    <property type="match status" value="1"/>
</dbReference>
<organism>
    <name type="scientific">Prochlorococcus marinus (strain SARG / CCMP1375 / SS120)</name>
    <dbReference type="NCBI Taxonomy" id="167539"/>
    <lineage>
        <taxon>Bacteria</taxon>
        <taxon>Bacillati</taxon>
        <taxon>Cyanobacteriota</taxon>
        <taxon>Cyanophyceae</taxon>
        <taxon>Synechococcales</taxon>
        <taxon>Prochlorococcaceae</taxon>
        <taxon>Prochlorococcus</taxon>
    </lineage>
</organism>
<sequence>MNNNSSSLSIGNKLFKSRLLIGTGKYQTLNQMQESIINSECEIVTVAVRRVQSSESSHKGLMEAIDWKKLWMLPNTAGCTNSEEAIRIAKMGRELAKLSGQEDNNFVKLEVIPDNRYLLPDPFGTLEAAEALIKEGFVVMPYINADPLLAKRLENIGCSCVMPLGSAIGSAQGIRNESNIRIIIENSNVPVIVDAGIGVPSHAAEAMEMGADAVLINSAIALAKDPKSMAEGMCKGVHAGRKAFLAGRLVEQPLANPSSPCTEISKSSYVQ</sequence>
<evidence type="ECO:0000255" key="1">
    <source>
        <dbReference type="HAMAP-Rule" id="MF_00443"/>
    </source>
</evidence>
<protein>
    <recommendedName>
        <fullName evidence="1">Thiazole synthase</fullName>
        <ecNumber evidence="1">2.8.1.10</ecNumber>
    </recommendedName>
</protein>
<reference key="1">
    <citation type="journal article" date="2003" name="Proc. Natl. Acad. Sci. U.S.A.">
        <title>Genome sequence of the cyanobacterium Prochlorococcus marinus SS120, a nearly minimal oxyphototrophic genome.</title>
        <authorList>
            <person name="Dufresne A."/>
            <person name="Salanoubat M."/>
            <person name="Partensky F."/>
            <person name="Artiguenave F."/>
            <person name="Axmann I.M."/>
            <person name="Barbe V."/>
            <person name="Duprat S."/>
            <person name="Galperin M.Y."/>
            <person name="Koonin E.V."/>
            <person name="Le Gall F."/>
            <person name="Makarova K.S."/>
            <person name="Ostrowski M."/>
            <person name="Oztas S."/>
            <person name="Robert C."/>
            <person name="Rogozin I.B."/>
            <person name="Scanlan D.J."/>
            <person name="Tandeau de Marsac N."/>
            <person name="Weissenbach J."/>
            <person name="Wincker P."/>
            <person name="Wolf Y.I."/>
            <person name="Hess W.R."/>
        </authorList>
    </citation>
    <scope>NUCLEOTIDE SEQUENCE [LARGE SCALE GENOMIC DNA]</scope>
    <source>
        <strain>SARG / CCMP1375 / SS120</strain>
    </source>
</reference>
<keyword id="KW-0963">Cytoplasm</keyword>
<keyword id="KW-1185">Reference proteome</keyword>
<keyword id="KW-0704">Schiff base</keyword>
<keyword id="KW-0784">Thiamine biosynthesis</keyword>
<keyword id="KW-0808">Transferase</keyword>
<accession>Q7V9K9</accession>
<proteinExistence type="inferred from homology"/>